<feature type="chain" id="PRO_0000058762" description="Cardiotrophin-1">
    <location>
        <begin position="1"/>
        <end position="201"/>
    </location>
</feature>
<feature type="splice variant" id="VSP_042725" description="In isoform 2." evidence="2">
    <location>
        <position position="9"/>
    </location>
</feature>
<feature type="sequence variant" id="VAR_014938" description="In dbSNP:rs2234933." evidence="1">
    <original>A</original>
    <variation>T</variation>
    <location>
        <position position="92"/>
    </location>
</feature>
<protein>
    <recommendedName>
        <fullName>Cardiotrophin-1</fullName>
        <shortName>CT-1</shortName>
    </recommendedName>
</protein>
<gene>
    <name type="primary">CTF1</name>
</gene>
<name>CTF1_HUMAN</name>
<reference key="1">
    <citation type="journal article" date="1996" name="Cytokine">
        <title>Human cardiotrophin-1: protein and gene structure, biological and binding activities, and chromosomal localization.</title>
        <authorList>
            <person name="Pennica D."/>
            <person name="Swanson T.A."/>
            <person name="Shaw K.J."/>
            <person name="Kuang W.-J."/>
            <person name="Gray C.L."/>
            <person name="Beatty B.G."/>
            <person name="Wood W.I."/>
        </authorList>
    </citation>
    <scope>NUCLEOTIDE SEQUENCE [GENOMIC DNA / MRNA] (ISOFORM 1)</scope>
    <source>
        <tissue>Heart</tissue>
    </source>
</reference>
<reference key="2">
    <citation type="journal article" date="2004" name="Nature">
        <title>The sequence and analysis of duplication-rich human chromosome 16.</title>
        <authorList>
            <person name="Martin J."/>
            <person name="Han C."/>
            <person name="Gordon L.A."/>
            <person name="Terry A."/>
            <person name="Prabhakar S."/>
            <person name="She X."/>
            <person name="Xie G."/>
            <person name="Hellsten U."/>
            <person name="Chan Y.M."/>
            <person name="Altherr M."/>
            <person name="Couronne O."/>
            <person name="Aerts A."/>
            <person name="Bajorek E."/>
            <person name="Black S."/>
            <person name="Blumer H."/>
            <person name="Branscomb E."/>
            <person name="Brown N.C."/>
            <person name="Bruno W.J."/>
            <person name="Buckingham J.M."/>
            <person name="Callen D.F."/>
            <person name="Campbell C.S."/>
            <person name="Campbell M.L."/>
            <person name="Campbell E.W."/>
            <person name="Caoile C."/>
            <person name="Challacombe J.F."/>
            <person name="Chasteen L.A."/>
            <person name="Chertkov O."/>
            <person name="Chi H.C."/>
            <person name="Christensen M."/>
            <person name="Clark L.M."/>
            <person name="Cohn J.D."/>
            <person name="Denys M."/>
            <person name="Detter J.C."/>
            <person name="Dickson M."/>
            <person name="Dimitrijevic-Bussod M."/>
            <person name="Escobar J."/>
            <person name="Fawcett J.J."/>
            <person name="Flowers D."/>
            <person name="Fotopulos D."/>
            <person name="Glavina T."/>
            <person name="Gomez M."/>
            <person name="Gonzales E."/>
            <person name="Goodstein D."/>
            <person name="Goodwin L.A."/>
            <person name="Grady D.L."/>
            <person name="Grigoriev I."/>
            <person name="Groza M."/>
            <person name="Hammon N."/>
            <person name="Hawkins T."/>
            <person name="Haydu L."/>
            <person name="Hildebrand C.E."/>
            <person name="Huang W."/>
            <person name="Israni S."/>
            <person name="Jett J."/>
            <person name="Jewett P.B."/>
            <person name="Kadner K."/>
            <person name="Kimball H."/>
            <person name="Kobayashi A."/>
            <person name="Krawczyk M.-C."/>
            <person name="Leyba T."/>
            <person name="Longmire J.L."/>
            <person name="Lopez F."/>
            <person name="Lou Y."/>
            <person name="Lowry S."/>
            <person name="Ludeman T."/>
            <person name="Manohar C.F."/>
            <person name="Mark G.A."/>
            <person name="McMurray K.L."/>
            <person name="Meincke L.J."/>
            <person name="Morgan J."/>
            <person name="Moyzis R.K."/>
            <person name="Mundt M.O."/>
            <person name="Munk A.C."/>
            <person name="Nandkeshwar R.D."/>
            <person name="Pitluck S."/>
            <person name="Pollard M."/>
            <person name="Predki P."/>
            <person name="Parson-Quintana B."/>
            <person name="Ramirez L."/>
            <person name="Rash S."/>
            <person name="Retterer J."/>
            <person name="Ricke D.O."/>
            <person name="Robinson D.L."/>
            <person name="Rodriguez A."/>
            <person name="Salamov A."/>
            <person name="Saunders E.H."/>
            <person name="Scott D."/>
            <person name="Shough T."/>
            <person name="Stallings R.L."/>
            <person name="Stalvey M."/>
            <person name="Sutherland R.D."/>
            <person name="Tapia R."/>
            <person name="Tesmer J.G."/>
            <person name="Thayer N."/>
            <person name="Thompson L.S."/>
            <person name="Tice H."/>
            <person name="Torney D.C."/>
            <person name="Tran-Gyamfi M."/>
            <person name="Tsai M."/>
            <person name="Ulanovsky L.E."/>
            <person name="Ustaszewska A."/>
            <person name="Vo N."/>
            <person name="White P.S."/>
            <person name="Williams A.L."/>
            <person name="Wills P.L."/>
            <person name="Wu J.-R."/>
            <person name="Wu K."/>
            <person name="Yang J."/>
            <person name="DeJong P."/>
            <person name="Bruce D."/>
            <person name="Doggett N.A."/>
            <person name="Deaven L."/>
            <person name="Schmutz J."/>
            <person name="Grimwood J."/>
            <person name="Richardson P."/>
            <person name="Rokhsar D.S."/>
            <person name="Eichler E.E."/>
            <person name="Gilna P."/>
            <person name="Lucas S.M."/>
            <person name="Myers R.M."/>
            <person name="Rubin E.M."/>
            <person name="Pennacchio L.A."/>
        </authorList>
    </citation>
    <scope>NUCLEOTIDE SEQUENCE [LARGE SCALE GENOMIC DNA]</scope>
</reference>
<reference key="3">
    <citation type="journal article" date="2004" name="Genome Res.">
        <title>The status, quality, and expansion of the NIH full-length cDNA project: the Mammalian Gene Collection (MGC).</title>
        <authorList>
            <consortium name="The MGC Project Team"/>
        </authorList>
    </citation>
    <scope>NUCLEOTIDE SEQUENCE [LARGE SCALE MRNA] (ISOFORMS 1 AND 2)</scope>
    <source>
        <tissue>Brain</tissue>
        <tissue>Lung</tissue>
    </source>
</reference>
<reference key="4">
    <citation type="journal article" date="2000" name="Hum. Mutat.">
        <title>Genetic variants in the promoter (g983G&gt;T) and coding region (A92T) of the human cardiotrophin-1 gene (CTF1) in patients with dilated cardiomyopathy.</title>
        <authorList>
            <person name="Erdmann J."/>
            <person name="Hassfeld S."/>
            <person name="Kallisch H."/>
            <person name="Fleck E."/>
            <person name="Regitz-Zagrose V."/>
        </authorList>
    </citation>
    <scope>VARIANT THR-92</scope>
</reference>
<proteinExistence type="evidence at protein level"/>
<comment type="function">
    <text>Induces cardiac myocyte hypertrophy in vitro. Binds to and activates the ILST/gp130 receptor.</text>
</comment>
<comment type="interaction">
    <interactant intactId="EBI-10238077">
        <id>Q16619</id>
    </interactant>
    <interactant intactId="EBI-1045155">
        <id>P43360</id>
        <label>MAGEA6</label>
    </interactant>
    <organismsDiffer>false</organismsDiffer>
    <experiments>3</experiments>
</comment>
<comment type="interaction">
    <interactant intactId="EBI-12276476">
        <id>Q16619-2</id>
    </interactant>
    <interactant intactId="EBI-1045155">
        <id>P43360</id>
        <label>MAGEA6</label>
    </interactant>
    <organismsDiffer>false</organismsDiffer>
    <experiments>3</experiments>
</comment>
<comment type="subcellular location">
    <subcellularLocation>
        <location>Secreted</location>
    </subcellularLocation>
</comment>
<comment type="alternative products">
    <event type="alternative splicing"/>
    <isoform>
        <id>Q16619-1</id>
        <name>1</name>
        <sequence type="displayed"/>
    </isoform>
    <isoform>
        <id>Q16619-2</id>
        <name>2</name>
        <sequence type="described" ref="VSP_042725"/>
    </isoform>
</comment>
<comment type="tissue specificity">
    <text>Highly expressed in heart, skeletal muscle, prostate and ovary. Lower levels in lung, kidney, pancreas, thymus, testis and small intestine. Little or no expression in brain, placenta, liver, spleen, colon or peripheral blood leukocytes.</text>
</comment>
<comment type="similarity">
    <text evidence="3">Belongs to the IL-6 superfamily.</text>
</comment>
<organism>
    <name type="scientific">Homo sapiens</name>
    <name type="common">Human</name>
    <dbReference type="NCBI Taxonomy" id="9606"/>
    <lineage>
        <taxon>Eukaryota</taxon>
        <taxon>Metazoa</taxon>
        <taxon>Chordata</taxon>
        <taxon>Craniata</taxon>
        <taxon>Vertebrata</taxon>
        <taxon>Euteleostomi</taxon>
        <taxon>Mammalia</taxon>
        <taxon>Eutheria</taxon>
        <taxon>Euarchontoglires</taxon>
        <taxon>Primates</taxon>
        <taxon>Haplorrhini</taxon>
        <taxon>Catarrhini</taxon>
        <taxon>Hominidae</taxon>
        <taxon>Homo</taxon>
    </lineage>
</organism>
<keyword id="KW-0025">Alternative splicing</keyword>
<keyword id="KW-0202">Cytokine</keyword>
<keyword id="KW-1267">Proteomics identification</keyword>
<keyword id="KW-1185">Reference proteome</keyword>
<keyword id="KW-0964">Secreted</keyword>
<accession>Q16619</accession>
<accession>A8MVX4</accession>
<accession>Q5U5Y7</accession>
<evidence type="ECO:0000269" key="1">
    <source>
    </source>
</evidence>
<evidence type="ECO:0000303" key="2">
    <source>
    </source>
</evidence>
<evidence type="ECO:0000305" key="3"/>
<dbReference type="EMBL" id="U43033">
    <property type="protein sequence ID" value="AAD12173.1"/>
    <property type="molecule type" value="Genomic_DNA"/>
</dbReference>
<dbReference type="EMBL" id="U43031">
    <property type="protein sequence ID" value="AAD12173.1"/>
    <property type="status" value="JOINED"/>
    <property type="molecule type" value="Genomic_DNA"/>
</dbReference>
<dbReference type="EMBL" id="U43032">
    <property type="protein sequence ID" value="AAD12173.1"/>
    <property type="status" value="JOINED"/>
    <property type="molecule type" value="Genomic_DNA"/>
</dbReference>
<dbReference type="EMBL" id="U43030">
    <property type="protein sequence ID" value="AAA85229.1"/>
    <property type="molecule type" value="mRNA"/>
</dbReference>
<dbReference type="EMBL" id="AC135048">
    <property type="status" value="NOT_ANNOTATED_CDS"/>
    <property type="molecule type" value="Genomic_DNA"/>
</dbReference>
<dbReference type="EMBL" id="BC036787">
    <property type="protein sequence ID" value="AAH36787.1"/>
    <property type="molecule type" value="mRNA"/>
</dbReference>
<dbReference type="EMBL" id="BC064416">
    <property type="protein sequence ID" value="AAH64416.1"/>
    <property type="molecule type" value="mRNA"/>
</dbReference>
<dbReference type="CCDS" id="CCDS10694.1">
    <molecule id="Q16619-1"/>
</dbReference>
<dbReference type="CCDS" id="CCDS45464.1">
    <molecule id="Q16619-2"/>
</dbReference>
<dbReference type="PIR" id="G02312">
    <property type="entry name" value="G02312"/>
</dbReference>
<dbReference type="RefSeq" id="NP_001136016.1">
    <molecule id="Q16619-2"/>
    <property type="nucleotide sequence ID" value="NM_001142544.3"/>
</dbReference>
<dbReference type="RefSeq" id="NP_001321.1">
    <molecule id="Q16619-1"/>
    <property type="nucleotide sequence ID" value="NM_001330.5"/>
</dbReference>
<dbReference type="SMR" id="Q16619"/>
<dbReference type="BioGRID" id="107871">
    <property type="interactions" value="11"/>
</dbReference>
<dbReference type="DIP" id="DIP-394N"/>
<dbReference type="FunCoup" id="Q16619">
    <property type="interactions" value="502"/>
</dbReference>
<dbReference type="IntAct" id="Q16619">
    <property type="interactions" value="7"/>
</dbReference>
<dbReference type="STRING" id="9606.ENSP00000279804"/>
<dbReference type="iPTMnet" id="Q16619"/>
<dbReference type="PhosphoSitePlus" id="Q16619"/>
<dbReference type="BioMuta" id="CTF1"/>
<dbReference type="DMDM" id="2498265"/>
<dbReference type="MassIVE" id="Q16619"/>
<dbReference type="PaxDb" id="9606-ENSP00000279804"/>
<dbReference type="PeptideAtlas" id="Q16619"/>
<dbReference type="ProteomicsDB" id="60953">
    <molecule id="Q16619-1"/>
</dbReference>
<dbReference type="ProteomicsDB" id="60954">
    <molecule id="Q16619-2"/>
</dbReference>
<dbReference type="Pumba" id="Q16619"/>
<dbReference type="Antibodypedia" id="27491">
    <property type="antibodies" value="503 antibodies from 32 providers"/>
</dbReference>
<dbReference type="DNASU" id="1489"/>
<dbReference type="Ensembl" id="ENST00000279804.3">
    <molecule id="Q16619-1"/>
    <property type="protein sequence ID" value="ENSP00000279804.2"/>
    <property type="gene ID" value="ENSG00000150281.7"/>
</dbReference>
<dbReference type="Ensembl" id="ENST00000395019.3">
    <molecule id="Q16619-2"/>
    <property type="protein sequence ID" value="ENSP00000378465.3"/>
    <property type="gene ID" value="ENSG00000150281.7"/>
</dbReference>
<dbReference type="GeneID" id="1489"/>
<dbReference type="KEGG" id="hsa:1489"/>
<dbReference type="MANE-Select" id="ENST00000279804.3">
    <property type="protein sequence ID" value="ENSP00000279804.2"/>
    <property type="RefSeq nucleotide sequence ID" value="NM_001330.5"/>
    <property type="RefSeq protein sequence ID" value="NP_001321.1"/>
</dbReference>
<dbReference type="UCSC" id="uc002dzw.3">
    <molecule id="Q16619-1"/>
    <property type="organism name" value="human"/>
</dbReference>
<dbReference type="AGR" id="HGNC:2499"/>
<dbReference type="CTD" id="1489"/>
<dbReference type="DisGeNET" id="1489"/>
<dbReference type="GeneCards" id="CTF1"/>
<dbReference type="HGNC" id="HGNC:2499">
    <property type="gene designation" value="CTF1"/>
</dbReference>
<dbReference type="HPA" id="ENSG00000150281">
    <property type="expression patterns" value="Low tissue specificity"/>
</dbReference>
<dbReference type="MalaCards" id="CTF1"/>
<dbReference type="MIM" id="600435">
    <property type="type" value="gene"/>
</dbReference>
<dbReference type="neXtProt" id="NX_Q16619"/>
<dbReference type="OpenTargets" id="ENSG00000150281"/>
<dbReference type="PharmGKB" id="PA27002"/>
<dbReference type="VEuPathDB" id="HostDB:ENSG00000150281"/>
<dbReference type="eggNOG" id="ENOG502S5Z6">
    <property type="taxonomic scope" value="Eukaryota"/>
</dbReference>
<dbReference type="GeneTree" id="ENSGT00510000048856"/>
<dbReference type="HOGENOM" id="CLU_117233_0_0_1"/>
<dbReference type="InParanoid" id="Q16619"/>
<dbReference type="OMA" id="CQQMDLN"/>
<dbReference type="OrthoDB" id="9938401at2759"/>
<dbReference type="PAN-GO" id="Q16619">
    <property type="GO annotations" value="4 GO annotations based on evolutionary models"/>
</dbReference>
<dbReference type="PhylomeDB" id="Q16619"/>
<dbReference type="TreeFam" id="TF333266"/>
<dbReference type="PathwayCommons" id="Q16619"/>
<dbReference type="Reactome" id="R-HSA-6788467">
    <property type="pathway name" value="IL-6-type cytokine receptor ligand interactions"/>
</dbReference>
<dbReference type="SignaLink" id="Q16619"/>
<dbReference type="SIGNOR" id="Q16619"/>
<dbReference type="BioGRID-ORCS" id="1489">
    <property type="hits" value="8 hits in 1152 CRISPR screens"/>
</dbReference>
<dbReference type="ChiTaRS" id="CTF1">
    <property type="organism name" value="human"/>
</dbReference>
<dbReference type="GenomeRNAi" id="1489"/>
<dbReference type="Pharos" id="Q16619">
    <property type="development level" value="Tbio"/>
</dbReference>
<dbReference type="PRO" id="PR:Q16619"/>
<dbReference type="Proteomes" id="UP000005640">
    <property type="component" value="Chromosome 16"/>
</dbReference>
<dbReference type="RNAct" id="Q16619">
    <property type="molecule type" value="protein"/>
</dbReference>
<dbReference type="Bgee" id="ENSG00000150281">
    <property type="expression patterns" value="Expressed in apex of heart and 102 other cell types or tissues"/>
</dbReference>
<dbReference type="GO" id="GO:0005576">
    <property type="term" value="C:extracellular region"/>
    <property type="evidence" value="ECO:0000318"/>
    <property type="project" value="GO_Central"/>
</dbReference>
<dbReference type="GO" id="GO:0005615">
    <property type="term" value="C:extracellular space"/>
    <property type="evidence" value="ECO:0007669"/>
    <property type="project" value="UniProtKB-KW"/>
</dbReference>
<dbReference type="GO" id="GO:0005125">
    <property type="term" value="F:cytokine activity"/>
    <property type="evidence" value="ECO:0000318"/>
    <property type="project" value="GO_Central"/>
</dbReference>
<dbReference type="GO" id="GO:0005146">
    <property type="term" value="F:leukemia inhibitory factor receptor binding"/>
    <property type="evidence" value="ECO:0000304"/>
    <property type="project" value="ProtInc"/>
</dbReference>
<dbReference type="GO" id="GO:0007259">
    <property type="term" value="P:cell surface receptor signaling pathway via JAK-STAT"/>
    <property type="evidence" value="ECO:0000318"/>
    <property type="project" value="GO_Central"/>
</dbReference>
<dbReference type="GO" id="GO:0007267">
    <property type="term" value="P:cell-cell signaling"/>
    <property type="evidence" value="ECO:0000304"/>
    <property type="project" value="ProtInc"/>
</dbReference>
<dbReference type="GO" id="GO:0007517">
    <property type="term" value="P:muscle organ development"/>
    <property type="evidence" value="ECO:0000304"/>
    <property type="project" value="ProtInc"/>
</dbReference>
<dbReference type="GO" id="GO:0007399">
    <property type="term" value="P:nervous system development"/>
    <property type="evidence" value="ECO:0000318"/>
    <property type="project" value="GO_Central"/>
</dbReference>
<dbReference type="GO" id="GO:0048666">
    <property type="term" value="P:neuron development"/>
    <property type="evidence" value="ECO:0007669"/>
    <property type="project" value="Ensembl"/>
</dbReference>
<dbReference type="GO" id="GO:0030182">
    <property type="term" value="P:neuron differentiation"/>
    <property type="evidence" value="ECO:0000304"/>
    <property type="project" value="GO_Central"/>
</dbReference>
<dbReference type="GO" id="GO:0008284">
    <property type="term" value="P:positive regulation of cell population proliferation"/>
    <property type="evidence" value="ECO:0000304"/>
    <property type="project" value="ProtInc"/>
</dbReference>
<dbReference type="GO" id="GO:0042531">
    <property type="term" value="P:positive regulation of tyrosine phosphorylation of STAT protein"/>
    <property type="evidence" value="ECO:0000314"/>
    <property type="project" value="CACAO"/>
</dbReference>
<dbReference type="FunFam" id="1.20.1250.10:FF:000027">
    <property type="entry name" value="Cardiotrophin 1"/>
    <property type="match status" value="1"/>
</dbReference>
<dbReference type="Gene3D" id="1.20.1250.10">
    <property type="match status" value="1"/>
</dbReference>
<dbReference type="InterPro" id="IPR009079">
    <property type="entry name" value="4_helix_cytokine-like_core"/>
</dbReference>
<dbReference type="InterPro" id="IPR010681">
    <property type="entry name" value="PRF/CT"/>
</dbReference>
<dbReference type="PANTHER" id="PTHR21353">
    <property type="match status" value="1"/>
</dbReference>
<dbReference type="PANTHER" id="PTHR21353:SF2">
    <property type="entry name" value="CARDIOTROPHIN-1"/>
    <property type="match status" value="1"/>
</dbReference>
<dbReference type="SUPFAM" id="SSF47266">
    <property type="entry name" value="4-helical cytokines"/>
    <property type="match status" value="1"/>
</dbReference>
<sequence>MSRREGSLEDPQTDSSVSLLPHLEAKIRQTHSLAHLLTKYAEQLLQEYVQLQGDPFGLPSFSPPRLPVAGLSAPAPSHAGLPVHERLRLDAAALAALPPLLDAVCRRQAELNPRAPRLLRRLEDAARQARALGAAVEALLAALGAANRGPRAEPPAATASAASATGVFPAKVLGLRVCGLYREWLSRTEGDLGQLLPGGSA</sequence>